<protein>
    <recommendedName>
        <fullName evidence="4">CAPA-Periviscerokinin-1</fullName>
        <shortName evidence="4">CAPA-PVK-1</shortName>
    </recommendedName>
</protein>
<reference evidence="5" key="1">
    <citation type="journal article" date="2012" name="Syst. Biol.">
        <title>Peptidomics-based phylogeny and biogeography of Mantophasmatodea (Hexapoda).</title>
        <authorList>
            <person name="Predel R."/>
            <person name="Neupert S."/>
            <person name="Huetteroth W."/>
            <person name="Kahnt J."/>
            <person name="Waidelich D."/>
            <person name="Roth S."/>
        </authorList>
    </citation>
    <scope>PROTEIN SEQUENCE</scope>
    <scope>AMIDATION AT VAL-11</scope>
    <source>
        <tissue evidence="3">Abdominal perisympathetic organs</tissue>
    </source>
</reference>
<feature type="peptide" id="PRO_0000420754" description="CAPA-Periviscerokinin-1" evidence="3">
    <location>
        <begin position="1"/>
        <end position="11"/>
    </location>
</feature>
<feature type="modified residue" description="Valine amide" evidence="3">
    <location>
        <position position="11"/>
    </location>
</feature>
<organism>
    <name type="scientific">Striatophasma naukluftense</name>
    <name type="common">Gladiator</name>
    <name type="synonym">Heel-walker</name>
    <dbReference type="NCBI Taxonomy" id="1041429"/>
    <lineage>
        <taxon>Eukaryota</taxon>
        <taxon>Metazoa</taxon>
        <taxon>Ecdysozoa</taxon>
        <taxon>Arthropoda</taxon>
        <taxon>Hexapoda</taxon>
        <taxon>Insecta</taxon>
        <taxon>Pterygota</taxon>
        <taxon>Neoptera</taxon>
        <taxon>Polyneoptera</taxon>
        <taxon>Mantophasmatodea</taxon>
        <taxon>Austrophasmatidae</taxon>
        <taxon>Striatophasma</taxon>
    </lineage>
</organism>
<evidence type="ECO:0000250" key="1">
    <source>
        <dbReference type="UniProtKB" id="P83923"/>
    </source>
</evidence>
<evidence type="ECO:0000255" key="2"/>
<evidence type="ECO:0000269" key="3">
    <source>
    </source>
</evidence>
<evidence type="ECO:0000303" key="4">
    <source>
    </source>
</evidence>
<evidence type="ECO:0000305" key="5"/>
<evidence type="ECO:0000305" key="6">
    <source>
    </source>
</evidence>
<keyword id="KW-0027">Amidation</keyword>
<keyword id="KW-0903">Direct protein sequencing</keyword>
<keyword id="KW-0527">Neuropeptide</keyword>
<keyword id="KW-0964">Secreted</keyword>
<accession>B0M2X0</accession>
<sequence>EAAGLISFPRV</sequence>
<dbReference type="GO" id="GO:0005576">
    <property type="term" value="C:extracellular region"/>
    <property type="evidence" value="ECO:0007669"/>
    <property type="project" value="UniProtKB-SubCell"/>
</dbReference>
<dbReference type="GO" id="GO:0007218">
    <property type="term" value="P:neuropeptide signaling pathway"/>
    <property type="evidence" value="ECO:0007669"/>
    <property type="project" value="UniProtKB-KW"/>
</dbReference>
<dbReference type="InterPro" id="IPR013231">
    <property type="entry name" value="Periviscerokinin"/>
</dbReference>
<dbReference type="Pfam" id="PF08259">
    <property type="entry name" value="Periviscerokin"/>
    <property type="match status" value="1"/>
</dbReference>
<name>PVK1_STRNA</name>
<proteinExistence type="evidence at protein level"/>
<comment type="function">
    <text evidence="1">Mediates visceral muscle contractile activity (myotropic activity).</text>
</comment>
<comment type="subcellular location">
    <subcellularLocation>
        <location evidence="6">Secreted</location>
    </subcellularLocation>
</comment>
<comment type="similarity">
    <text evidence="2">Belongs to the periviscerokinin family.</text>
</comment>